<feature type="signal peptide" evidence="2">
    <location>
        <begin position="1"/>
        <end position="26"/>
    </location>
</feature>
<feature type="chain" id="PRO_0000019327" description="Ecto-ADP-ribosyltransferase 3">
    <location>
        <begin position="27"/>
        <end position="345"/>
    </location>
</feature>
<feature type="propeptide" id="PRO_0000019328" description="Removed in mature form" evidence="1">
    <location>
        <begin position="346"/>
        <end position="371"/>
    </location>
</feature>
<feature type="domain" description="TR mART core" evidence="3">
    <location>
        <begin position="64"/>
        <end position="250"/>
    </location>
</feature>
<feature type="region of interest" description="Disordered" evidence="4">
    <location>
        <begin position="306"/>
        <end position="346"/>
    </location>
</feature>
<feature type="binding site" evidence="1">
    <location>
        <position position="101"/>
    </location>
    <ligand>
        <name>NAD(+)</name>
        <dbReference type="ChEBI" id="CHEBI:57540"/>
    </ligand>
</feature>
<feature type="binding site" evidence="1">
    <location>
        <position position="182"/>
    </location>
    <ligand>
        <name>NAD(+)</name>
        <dbReference type="ChEBI" id="CHEBI:57540"/>
    </ligand>
</feature>
<feature type="lipid moiety-binding region" description="GPI-anchor amidated serine" evidence="1">
    <location>
        <position position="345"/>
    </location>
</feature>
<feature type="disulfide bond" evidence="1">
    <location>
        <begin position="43"/>
        <end position="255"/>
    </location>
</feature>
<feature type="splice variant" id="VSP_036193" description="In isoform 5." evidence="5">
    <location>
        <begin position="271"/>
        <end position="291"/>
    </location>
</feature>
<feature type="splice variant" id="VSP_036199" description="In isoform 7." evidence="6">
    <original>DRSRGKANNPT</original>
    <variation>A</variation>
    <location>
        <begin position="321"/>
        <end position="331"/>
    </location>
</feature>
<feature type="sequence conflict" description="In Ref. 2; CAA69284." evidence="7" ref="2">
    <original>TLLAA</original>
    <variation>AAGS</variation>
    <location>
        <begin position="11"/>
        <end position="15"/>
    </location>
</feature>
<feature type="sequence conflict" description="In Ref. 3; AAI41070." evidence="7" ref="3">
    <location>
        <position position="348"/>
    </location>
</feature>
<organism>
    <name type="scientific">Mus musculus</name>
    <name type="common">Mouse</name>
    <dbReference type="NCBI Taxonomy" id="10090"/>
    <lineage>
        <taxon>Eukaryota</taxon>
        <taxon>Metazoa</taxon>
        <taxon>Chordata</taxon>
        <taxon>Craniata</taxon>
        <taxon>Vertebrata</taxon>
        <taxon>Euteleostomi</taxon>
        <taxon>Mammalia</taxon>
        <taxon>Eutheria</taxon>
        <taxon>Euarchontoglires</taxon>
        <taxon>Glires</taxon>
        <taxon>Rodentia</taxon>
        <taxon>Myomorpha</taxon>
        <taxon>Muroidea</taxon>
        <taxon>Muridae</taxon>
        <taxon>Murinae</taxon>
        <taxon>Mus</taxon>
        <taxon>Mus</taxon>
    </lineage>
</organism>
<evidence type="ECO:0000250" key="1"/>
<evidence type="ECO:0000255" key="2"/>
<evidence type="ECO:0000255" key="3">
    <source>
        <dbReference type="PROSITE-ProRule" id="PRU01340"/>
    </source>
</evidence>
<evidence type="ECO:0000256" key="4">
    <source>
        <dbReference type="SAM" id="MobiDB-lite"/>
    </source>
</evidence>
<evidence type="ECO:0000303" key="5">
    <source>
    </source>
</evidence>
<evidence type="ECO:0000303" key="6">
    <source>
    </source>
</evidence>
<evidence type="ECO:0000305" key="7"/>
<keyword id="KW-0025">Alternative splicing</keyword>
<keyword id="KW-1003">Cell membrane</keyword>
<keyword id="KW-1015">Disulfide bond</keyword>
<keyword id="KW-0325">Glycoprotein</keyword>
<keyword id="KW-0328">Glycosyltransferase</keyword>
<keyword id="KW-0336">GPI-anchor</keyword>
<keyword id="KW-0449">Lipoprotein</keyword>
<keyword id="KW-0472">Membrane</keyword>
<keyword id="KW-0520">NAD</keyword>
<keyword id="KW-0521">NADP</keyword>
<keyword id="KW-0548">Nucleotidyltransferase</keyword>
<keyword id="KW-1185">Reference proteome</keyword>
<keyword id="KW-0732">Signal</keyword>
<keyword id="KW-0808">Transferase</keyword>
<reference key="1">
    <citation type="journal article" date="2002" name="Protein Sci.">
        <title>The family of toxin-related ecto-ADP-ribosyltransferases in humans and the mouse.</title>
        <authorList>
            <person name="Glowacki G."/>
            <person name="Braren R."/>
            <person name="Firner K."/>
            <person name="Nissen M."/>
            <person name="Kuehl M."/>
            <person name="Reche P."/>
            <person name="Bazan J.F."/>
            <person name="Cetkovic-Cvrlje M."/>
            <person name="Leiter E."/>
            <person name="Haag F."/>
            <person name="Koch-Nolte F."/>
        </authorList>
    </citation>
    <scope>NUCLEOTIDE SEQUENCE [GENOMIC DNA / MRNA] (ISOFORM 5)</scope>
</reference>
<reference key="2">
    <citation type="submission" date="1996-09" db="EMBL/GenBank/DDBJ databases">
        <title>Molecular cloning of two ecto-mono(ADP-ribosyl)transferases operating in murine testis.</title>
        <authorList>
            <person name="Koch-Nolte F."/>
            <person name="Firner K."/>
            <person name="Haag F."/>
            <person name="Khl M."/>
            <person name="Thiele H.G."/>
        </authorList>
    </citation>
    <scope>NUCLEOTIDE SEQUENCE [GENOMIC DNA] (ISOFORM 8)</scope>
    <source>
        <tissue>Testis</tissue>
    </source>
</reference>
<reference key="3">
    <citation type="journal article" date="2004" name="Genome Res.">
        <title>The status, quality, and expansion of the NIH full-length cDNA project: the Mammalian Gene Collection (MGC).</title>
        <authorList>
            <consortium name="The MGC Project Team"/>
        </authorList>
    </citation>
    <scope>NUCLEOTIDE SEQUENCE [LARGE SCALE MRNA] (ISOFORM 7)</scope>
    <source>
        <tissue>Brain</tissue>
    </source>
</reference>
<reference key="4">
    <citation type="journal article" date="2010" name="Cell">
        <title>A tissue-specific atlas of mouse protein phosphorylation and expression.</title>
        <authorList>
            <person name="Huttlin E.L."/>
            <person name="Jedrychowski M.P."/>
            <person name="Elias J.E."/>
            <person name="Goswami T."/>
            <person name="Rad R."/>
            <person name="Beausoleil S.A."/>
            <person name="Villen J."/>
            <person name="Haas W."/>
            <person name="Sowa M.E."/>
            <person name="Gygi S.P."/>
        </authorList>
    </citation>
    <scope>IDENTIFICATION BY MASS SPECTROMETRY [LARGE SCALE ANALYSIS]</scope>
    <source>
        <tissue>Brown adipose tissue</tissue>
        <tissue>Heart</tissue>
        <tissue>Lung</tissue>
        <tissue>Testis</tissue>
    </source>
</reference>
<dbReference type="EC" id="2.4.2.31"/>
<dbReference type="EMBL" id="AJ311768">
    <property type="protein sequence ID" value="CAC84539.1"/>
    <property type="status" value="ALT_SEQ"/>
    <property type="molecule type" value="Genomic_DNA"/>
</dbReference>
<dbReference type="EMBL" id="AJ311769">
    <property type="protein sequence ID" value="CAC84526.1"/>
    <property type="status" value="ALT_SEQ"/>
    <property type="molecule type" value="mRNA"/>
</dbReference>
<dbReference type="EMBL" id="AJ311770">
    <property type="protein sequence ID" value="CAC84540.1"/>
    <property type="status" value="ALT_SEQ"/>
    <property type="molecule type" value="mRNA"/>
</dbReference>
<dbReference type="EMBL" id="AJ311771">
    <property type="protein sequence ID" value="CAC84541.1"/>
    <property type="status" value="ALT_SEQ"/>
    <property type="molecule type" value="mRNA"/>
</dbReference>
<dbReference type="EMBL" id="AJ311772">
    <property type="protein sequence ID" value="CAC84542.1"/>
    <property type="molecule type" value="mRNA"/>
</dbReference>
<dbReference type="EMBL" id="AJ311773">
    <property type="protein sequence ID" value="CAC84543.1"/>
    <property type="status" value="ALT_SEQ"/>
    <property type="molecule type" value="mRNA"/>
</dbReference>
<dbReference type="EMBL" id="Y08027">
    <property type="protein sequence ID" value="CAA69284.1"/>
    <property type="molecule type" value="Genomic_DNA"/>
</dbReference>
<dbReference type="EMBL" id="BC141069">
    <property type="protein sequence ID" value="AAI41070.1"/>
    <property type="molecule type" value="mRNA"/>
</dbReference>
<dbReference type="CCDS" id="CCDS51546.1">
    <molecule id="Q8R2G4-8"/>
</dbReference>
<dbReference type="CCDS" id="CCDS84904.1">
    <molecule id="Q8R2G4-7"/>
</dbReference>
<dbReference type="RefSeq" id="NP_001297594.1">
    <molecule id="Q8R2G4-7"/>
    <property type="nucleotide sequence ID" value="NM_001310665.1"/>
</dbReference>
<dbReference type="RefSeq" id="NP_001357520.1">
    <molecule id="Q8R2G4-5"/>
    <property type="nucleotide sequence ID" value="NM_001370591.1"/>
</dbReference>
<dbReference type="RefSeq" id="NP_859417.2">
    <molecule id="Q8R2G4-8"/>
    <property type="nucleotide sequence ID" value="NM_181728.3"/>
</dbReference>
<dbReference type="RefSeq" id="XP_006534780.1">
    <property type="nucleotide sequence ID" value="XM_006534717.2"/>
</dbReference>
<dbReference type="RefSeq" id="XP_006534781.1">
    <molecule id="Q8R2G4-8"/>
    <property type="nucleotide sequence ID" value="XM_006534718.4"/>
</dbReference>
<dbReference type="RefSeq" id="XP_030109908.1">
    <molecule id="Q8R2G4-5"/>
    <property type="nucleotide sequence ID" value="XM_030254048.1"/>
</dbReference>
<dbReference type="RefSeq" id="XP_030109909.1">
    <molecule id="Q8R2G4-5"/>
    <property type="nucleotide sequence ID" value="XM_030254049.2"/>
</dbReference>
<dbReference type="RefSeq" id="XP_030109911.1">
    <molecule id="Q8R2G4-8"/>
    <property type="nucleotide sequence ID" value="XM_030254051.2"/>
</dbReference>
<dbReference type="RefSeq" id="XP_030109912.1">
    <molecule id="Q8R2G4-8"/>
    <property type="nucleotide sequence ID" value="XM_030254052.2"/>
</dbReference>
<dbReference type="RefSeq" id="XP_030109913.1">
    <molecule id="Q8R2G4-8"/>
    <property type="nucleotide sequence ID" value="XM_030254053.1"/>
</dbReference>
<dbReference type="RefSeq" id="XP_030109914.1">
    <molecule id="Q8R2G4-8"/>
    <property type="nucleotide sequence ID" value="XM_030254054.2"/>
</dbReference>
<dbReference type="RefSeq" id="XP_036020621.1">
    <molecule id="Q8R2G4-8"/>
    <property type="nucleotide sequence ID" value="XM_036164728.1"/>
</dbReference>
<dbReference type="SMR" id="Q8R2G4"/>
<dbReference type="FunCoup" id="Q8R2G4">
    <property type="interactions" value="31"/>
</dbReference>
<dbReference type="IntAct" id="Q8R2G4">
    <property type="interactions" value="1"/>
</dbReference>
<dbReference type="STRING" id="10090.ENSMUSP00000113510"/>
<dbReference type="GlyGen" id="Q8R2G4">
    <property type="glycosylation" value="3 sites, 1 N-linked glycan (1 site), 1 O-linked glycan (1 site)"/>
</dbReference>
<dbReference type="PhosphoSitePlus" id="Q8R2G4"/>
<dbReference type="CPTAC" id="non-CPTAC-3404"/>
<dbReference type="CPTAC" id="non-CPTAC-3483"/>
<dbReference type="jPOST" id="Q8R2G4"/>
<dbReference type="PaxDb" id="10090-ENSMUSP00000113493"/>
<dbReference type="PeptideAtlas" id="Q8R2G4"/>
<dbReference type="ProteomicsDB" id="252767">
    <molecule id="Q8R2G4-5"/>
</dbReference>
<dbReference type="ProteomicsDB" id="252768">
    <molecule id="Q8R2G4-7"/>
</dbReference>
<dbReference type="ProteomicsDB" id="252769">
    <molecule id="Q8R2G4-8"/>
</dbReference>
<dbReference type="Antibodypedia" id="2182">
    <property type="antibodies" value="392 antibodies from 29 providers"/>
</dbReference>
<dbReference type="DNASU" id="109979"/>
<dbReference type="Ensembl" id="ENSMUST00000113083.9">
    <molecule id="Q8R2G4-8"/>
    <property type="protein sequence ID" value="ENSMUSP00000108706.3"/>
    <property type="gene ID" value="ENSMUSG00000034842.17"/>
</dbReference>
<dbReference type="Ensembl" id="ENSMUST00000119587.8">
    <molecule id="Q8R2G4-7"/>
    <property type="protein sequence ID" value="ENSMUSP00000112648.2"/>
    <property type="gene ID" value="ENSMUSG00000034842.17"/>
</dbReference>
<dbReference type="GeneID" id="109979"/>
<dbReference type="KEGG" id="mmu:109979"/>
<dbReference type="UCSC" id="uc008ycw.1">
    <molecule id="Q8R2G4-5"/>
    <property type="organism name" value="mouse"/>
</dbReference>
<dbReference type="UCSC" id="uc008ycy.2">
    <molecule id="Q8R2G4-8"/>
    <property type="organism name" value="mouse"/>
</dbReference>
<dbReference type="UCSC" id="uc008ydg.2">
    <molecule id="Q8R2G4-7"/>
    <property type="organism name" value="mouse"/>
</dbReference>
<dbReference type="AGR" id="MGI:1202729"/>
<dbReference type="CTD" id="419"/>
<dbReference type="MGI" id="MGI:1202729">
    <property type="gene designation" value="Art3"/>
</dbReference>
<dbReference type="VEuPathDB" id="HostDB:ENSMUSG00000034842"/>
<dbReference type="eggNOG" id="ENOG502SHYX">
    <property type="taxonomic scope" value="Eukaryota"/>
</dbReference>
<dbReference type="GeneTree" id="ENSGT01030000234601"/>
<dbReference type="HOGENOM" id="CLU_059744_3_1_1"/>
<dbReference type="InParanoid" id="Q8R2G4"/>
<dbReference type="OMA" id="EDPGMKS"/>
<dbReference type="PhylomeDB" id="Q8R2G4"/>
<dbReference type="TreeFam" id="TF335356"/>
<dbReference type="Reactome" id="R-MMU-163125">
    <property type="pathway name" value="Post-translational modification: synthesis of GPI-anchored proteins"/>
</dbReference>
<dbReference type="BioGRID-ORCS" id="109979">
    <property type="hits" value="5 hits in 78 CRISPR screens"/>
</dbReference>
<dbReference type="ChiTaRS" id="Art3">
    <property type="organism name" value="mouse"/>
</dbReference>
<dbReference type="PRO" id="PR:Q8R2G4"/>
<dbReference type="Proteomes" id="UP000000589">
    <property type="component" value="Chromosome 5"/>
</dbReference>
<dbReference type="RNAct" id="Q8R2G4">
    <property type="molecule type" value="protein"/>
</dbReference>
<dbReference type="Bgee" id="ENSMUSG00000034842">
    <property type="expression patterns" value="Expressed in spermatocyte and 167 other cell types or tissues"/>
</dbReference>
<dbReference type="ExpressionAtlas" id="Q8R2G4">
    <property type="expression patterns" value="baseline and differential"/>
</dbReference>
<dbReference type="GO" id="GO:0005886">
    <property type="term" value="C:plasma membrane"/>
    <property type="evidence" value="ECO:0007669"/>
    <property type="project" value="UniProtKB-SubCell"/>
</dbReference>
<dbReference type="GO" id="GO:0098552">
    <property type="term" value="C:side of membrane"/>
    <property type="evidence" value="ECO:0007669"/>
    <property type="project" value="UniProtKB-KW"/>
</dbReference>
<dbReference type="GO" id="GO:0106274">
    <property type="term" value="F:NAD+-protein-arginine ADP-ribosyltransferase activity"/>
    <property type="evidence" value="ECO:0007669"/>
    <property type="project" value="UniProtKB-EC"/>
</dbReference>
<dbReference type="GO" id="GO:0016779">
    <property type="term" value="F:nucleotidyltransferase activity"/>
    <property type="evidence" value="ECO:0007669"/>
    <property type="project" value="UniProtKB-KW"/>
</dbReference>
<dbReference type="FunFam" id="3.90.176.10:FF:000002">
    <property type="entry name" value="NAD(P)(+)--arginine ADP-ribosyltransferase"/>
    <property type="match status" value="1"/>
</dbReference>
<dbReference type="Gene3D" id="3.90.176.10">
    <property type="entry name" value="Toxin ADP-ribosyltransferase, Chain A, domain 1"/>
    <property type="match status" value="1"/>
</dbReference>
<dbReference type="InterPro" id="IPR050999">
    <property type="entry name" value="ADP-ribosyltransferase_ARG"/>
</dbReference>
<dbReference type="InterPro" id="IPR000768">
    <property type="entry name" value="ART"/>
</dbReference>
<dbReference type="PANTHER" id="PTHR10339">
    <property type="entry name" value="ADP-RIBOSYLTRANSFERASE"/>
    <property type="match status" value="1"/>
</dbReference>
<dbReference type="PANTHER" id="PTHR10339:SF4">
    <property type="entry name" value="ECTO-ADP-RIBOSYLTRANSFERASE 3"/>
    <property type="match status" value="1"/>
</dbReference>
<dbReference type="Pfam" id="PF01129">
    <property type="entry name" value="ART"/>
    <property type="match status" value="1"/>
</dbReference>
<dbReference type="PRINTS" id="PR00970">
    <property type="entry name" value="RIBTRNSFRASE"/>
</dbReference>
<dbReference type="SUPFAM" id="SSF56399">
    <property type="entry name" value="ADP-ribosylation"/>
    <property type="match status" value="1"/>
</dbReference>
<dbReference type="PROSITE" id="PS51996">
    <property type="entry name" value="TR_MART"/>
    <property type="match status" value="1"/>
</dbReference>
<comment type="catalytic activity">
    <reaction>
        <text>L-arginyl-[protein] + NAD(+) = N(omega)-(ADP-D-ribosyl)-L-arginyl-[protein] + nicotinamide + H(+)</text>
        <dbReference type="Rhea" id="RHEA:19149"/>
        <dbReference type="Rhea" id="RHEA-COMP:10532"/>
        <dbReference type="Rhea" id="RHEA-COMP:15087"/>
        <dbReference type="ChEBI" id="CHEBI:15378"/>
        <dbReference type="ChEBI" id="CHEBI:17154"/>
        <dbReference type="ChEBI" id="CHEBI:29965"/>
        <dbReference type="ChEBI" id="CHEBI:57540"/>
        <dbReference type="ChEBI" id="CHEBI:142554"/>
        <dbReference type="EC" id="2.4.2.31"/>
    </reaction>
</comment>
<comment type="subcellular location">
    <subcellularLocation>
        <location evidence="1">Cell membrane</location>
        <topology evidence="1">Lipid-anchor</topology>
        <topology evidence="1">GPI-anchor</topology>
    </subcellularLocation>
</comment>
<comment type="alternative products">
    <event type="alternative splicing"/>
    <isoform>
        <id>Q8R2G4-5</id>
        <name>8</name>
        <sequence type="displayed"/>
    </isoform>
    <isoform>
        <id>Q8R2G4-7</id>
        <name>5</name>
        <sequence type="described" ref="VSP_036193"/>
    </isoform>
    <isoform>
        <id>Q8R2G4-8</id>
        <name>7</name>
        <sequence type="described" ref="VSP_036199"/>
    </isoform>
</comment>
<comment type="similarity">
    <text evidence="7">Belongs to the Arg-specific ADP-ribosyltransferase family.</text>
</comment>
<comment type="sequence caution" evidence="7">
    <conflict type="miscellaneous discrepancy">
        <sequence resource="EMBL-CDS" id="CAC84526"/>
    </conflict>
    <text>3'extension leads to out-of-frame translation.</text>
</comment>
<comment type="sequence caution" evidence="7">
    <conflict type="erroneous gene model prediction">
        <sequence resource="EMBL-CDS" id="CAC84539"/>
    </conflict>
</comment>
<comment type="sequence caution" evidence="7">
    <conflict type="miscellaneous discrepancy">
        <sequence resource="EMBL-CDS" id="CAC84540"/>
    </conflict>
    <text>3'extension leads to out-of-frame translation.</text>
</comment>
<comment type="sequence caution" evidence="7">
    <conflict type="miscellaneous discrepancy">
        <sequence resource="EMBL-CDS" id="CAC84541"/>
    </conflict>
    <text>3'extension leads to out-of-frame translation.</text>
</comment>
<comment type="sequence caution" evidence="7">
    <conflict type="miscellaneous discrepancy">
        <sequence resource="EMBL-CDS" id="CAC84543"/>
    </conflict>
    <text>3'extension leads to out-of-frame translation.</text>
</comment>
<sequence length="371" mass="42015">MKMGHFEMVTTLLAAAVLMDIFQVKAEVLDMAENAFDDEYLKCKSRMESKYIPQMKREEWANDALLRMVWDNAEIQWEARKAQLFLPRNFKDTYGIALTAYVNEAQEQTSFYHTFSSAVKMAGLSRRRYIYNFPFKAFHFYLVRALQLLRRPCEKSYKTVVYSTSPDISFTFGEQNQARLGNFTLAYSAKPETADNQRVLTIQTCFGVAVGKFLNKEDDSVVLIPLSEVFQVSRKGTSNDLVLQSINSTCSYYECAFLGGLKTENCIANAEYIDPRYLYNPDMDNQKLEDSGRNNLDPDRMPEIKVLQTEENPLLPDEKPDRSRGKANNPTPGLVPGPKSHPSASSGNTLLPSVMASTILLVASAVNFIEL</sequence>
<protein>
    <recommendedName>
        <fullName>Ecto-ADP-ribosyltransferase 3</fullName>
        <ecNumber>2.4.2.31</ecNumber>
    </recommendedName>
    <alternativeName>
        <fullName>ADP-ribosyltransferase C2 and C3 toxin-like 3</fullName>
        <shortName>ARTC3</shortName>
    </alternativeName>
    <alternativeName>
        <fullName>Mono(ADP-ribosyl)transferase 3</fullName>
    </alternativeName>
    <alternativeName>
        <fullName>NAD(P)(+)--arginine ADP-ribosyltransferase 3</fullName>
    </alternativeName>
</protein>
<accession>Q8R2G4</accession>
<accession>B2RUC2</accession>
<accession>O54738</accession>
<accession>Q8R2F9</accession>
<accession>Q8R2G0</accession>
<accession>Q8R2G1</accession>
<accession>Q8R2G2</accession>
<accession>Q8R2G3</accession>
<gene>
    <name type="primary">Art3</name>
</gene>
<name>NAR3_MOUSE</name>
<proteinExistence type="evidence at protein level"/>